<gene>
    <name type="primary">MRP35</name>
    <name type="ordered locus">YNL122C</name>
    <name type="ORF">N1901</name>
</gene>
<accession>P53921</accession>
<accession>B0KZR4</accession>
<accession>B0KZU1</accession>
<accession>B0KZY6</accession>
<accession>D6W161</accession>
<comment type="function">
    <text evidence="9 10">Component of the mitochondrial ribosome (mitoribosome), a dedicated translation machinery responsible for the synthesis of mitochondrial genome-encoded proteins, including at least some of the essential transmembrane subunits of the mitochondrial respiratory chain. The mitoribosomes are attached to the mitochondrial inner membrane and translation products are cotranslationally integrated into the membrane.</text>
</comment>
<comment type="subunit">
    <text evidence="5">Component of the mitochondrial large ribosomal subunit (mt-LSU). Mature yeast 74S mitochondrial ribosomes consist of a small (37S) and a large (54S) subunit. The 37S small subunit contains a 15S ribosomal RNA (15S mt-rRNA) and 34 different proteins. The 54S large subunit contains a 21S rRNA (21S mt-rRNA) and 46 different proteins.</text>
</comment>
<comment type="subcellular location">
    <subcellularLocation>
        <location evidence="2 3">Mitochondrion</location>
    </subcellularLocation>
    <text evidence="6">Mitoribosomes are tethered to the mitochondrial inner membrane and spatially aligned with the membrane insertion machinery through two distinct membrane contact sites, formed by the 21S rRNA expansion segment 96-ES1 and the inner membrane protein MBA1.</text>
</comment>
<comment type="similarity">
    <text evidence="8">Belongs to the bacterial ribosomal protein bL35 family.</text>
</comment>
<organism>
    <name type="scientific">Saccharomyces cerevisiae (strain ATCC 204508 / S288c)</name>
    <name type="common">Baker's yeast</name>
    <dbReference type="NCBI Taxonomy" id="559292"/>
    <lineage>
        <taxon>Eukaryota</taxon>
        <taxon>Fungi</taxon>
        <taxon>Dikarya</taxon>
        <taxon>Ascomycota</taxon>
        <taxon>Saccharomycotina</taxon>
        <taxon>Saccharomycetes</taxon>
        <taxon>Saccharomycetales</taxon>
        <taxon>Saccharomycetaceae</taxon>
        <taxon>Saccharomyces</taxon>
    </lineage>
</organism>
<reference key="1">
    <citation type="journal article" date="2008" name="Genetics">
        <title>Sequential elimination of major-effect contributors identifies additional quantitative trait loci conditioning high-temperature growth in yeast.</title>
        <authorList>
            <person name="Sinha H."/>
            <person name="David L."/>
            <person name="Pascon R.C."/>
            <person name="Clauder-Muenster S."/>
            <person name="Krishnakumar S."/>
            <person name="Nguyen M."/>
            <person name="Shi G."/>
            <person name="Dean J."/>
            <person name="Davis R.W."/>
            <person name="Oefner P.J."/>
            <person name="McCusker J.H."/>
            <person name="Steinmetz L.M."/>
        </authorList>
    </citation>
    <scope>NUCLEOTIDE SEQUENCE [GENOMIC DNA]</scope>
    <scope>VARIANTS GLN-11 AND PRO-31</scope>
    <source>
        <strain>ATCC 200060 / W303</strain>
        <strain>S103</strain>
        <strain>SK1</strain>
        <strain>V1-09</strain>
        <strain>YJM 1129</strain>
        <strain>YJM 269</strain>
        <strain>YJM 270</strain>
        <strain>YJM 320</strain>
        <strain>YJM 326</strain>
        <strain>YJM 339</strain>
        <strain>YJM 627</strain>
        <strain>YJM230</strain>
    </source>
</reference>
<reference key="2">
    <citation type="journal article" date="1997" name="Yeast">
        <title>The DNA sequence of cosmid 14-13b from chromosome XIV of Saccharomyces cerevisiae reveals an unusually high number of overlapping open reading frames.</title>
        <authorList>
            <person name="de Antoni A."/>
            <person name="D'Angelo M."/>
            <person name="Dal Pero F."/>
            <person name="Sartorello F."/>
            <person name="Pandolfo D."/>
            <person name="Pallavicini A."/>
            <person name="Lanfranchi G."/>
            <person name="Valle G."/>
        </authorList>
    </citation>
    <scope>NUCLEOTIDE SEQUENCE [GENOMIC DNA]</scope>
</reference>
<reference key="3">
    <citation type="journal article" date="1997" name="Nature">
        <title>The nucleotide sequence of Saccharomyces cerevisiae chromosome XIV and its evolutionary implications.</title>
        <authorList>
            <person name="Philippsen P."/>
            <person name="Kleine K."/>
            <person name="Poehlmann R."/>
            <person name="Duesterhoeft A."/>
            <person name="Hamberg K."/>
            <person name="Hegemann J.H."/>
            <person name="Obermaier B."/>
            <person name="Urrestarazu L.A."/>
            <person name="Aert R."/>
            <person name="Albermann K."/>
            <person name="Altmann R."/>
            <person name="Andre B."/>
            <person name="Baladron V."/>
            <person name="Ballesta J.P.G."/>
            <person name="Becam A.-M."/>
            <person name="Beinhauer J.D."/>
            <person name="Boskovic J."/>
            <person name="Buitrago M.J."/>
            <person name="Bussereau F."/>
            <person name="Coster F."/>
            <person name="Crouzet M."/>
            <person name="D'Angelo M."/>
            <person name="Dal Pero F."/>
            <person name="De Antoni A."/>
            <person name="del Rey F."/>
            <person name="Doignon F."/>
            <person name="Domdey H."/>
            <person name="Dubois E."/>
            <person name="Fiedler T.A."/>
            <person name="Fleig U."/>
            <person name="Floeth M."/>
            <person name="Fritz C."/>
            <person name="Gaillardin C."/>
            <person name="Garcia-Cantalejo J.M."/>
            <person name="Glansdorff N."/>
            <person name="Goffeau A."/>
            <person name="Gueldener U."/>
            <person name="Herbert C.J."/>
            <person name="Heumann K."/>
            <person name="Heuss-Neitzel D."/>
            <person name="Hilbert H."/>
            <person name="Hinni K."/>
            <person name="Iraqui Houssaini I."/>
            <person name="Jacquet M."/>
            <person name="Jimenez A."/>
            <person name="Jonniaux J.-L."/>
            <person name="Karpfinger-Hartl L."/>
            <person name="Lanfranchi G."/>
            <person name="Lepingle A."/>
            <person name="Levesque H."/>
            <person name="Lyck R."/>
            <person name="Maftahi M."/>
            <person name="Mallet L."/>
            <person name="Maurer C.T.C."/>
            <person name="Messenguy F."/>
            <person name="Mewes H.-W."/>
            <person name="Moestl D."/>
            <person name="Nasr F."/>
            <person name="Nicaud J.-M."/>
            <person name="Niedenthal R.K."/>
            <person name="Pandolfo D."/>
            <person name="Pierard A."/>
            <person name="Piravandi E."/>
            <person name="Planta R.J."/>
            <person name="Pohl T.M."/>
            <person name="Purnelle B."/>
            <person name="Rebischung C."/>
            <person name="Remacha M.A."/>
            <person name="Revuelta J.L."/>
            <person name="Rinke M."/>
            <person name="Saiz J.E."/>
            <person name="Sartorello F."/>
            <person name="Scherens B."/>
            <person name="Sen-Gupta M."/>
            <person name="Soler-Mira A."/>
            <person name="Urbanus J.H.M."/>
            <person name="Valle G."/>
            <person name="Van Dyck L."/>
            <person name="Verhasselt P."/>
            <person name="Vierendeels F."/>
            <person name="Vissers S."/>
            <person name="Voet M."/>
            <person name="Volckaert G."/>
            <person name="Wach A."/>
            <person name="Wambutt R."/>
            <person name="Wedler H."/>
            <person name="Zollner A."/>
            <person name="Hani J."/>
        </authorList>
    </citation>
    <scope>NUCLEOTIDE SEQUENCE [LARGE SCALE GENOMIC DNA]</scope>
    <source>
        <strain>ATCC 204508 / S288c</strain>
    </source>
</reference>
<reference key="4">
    <citation type="journal article" date="2014" name="G3 (Bethesda)">
        <title>The reference genome sequence of Saccharomyces cerevisiae: Then and now.</title>
        <authorList>
            <person name="Engel S.R."/>
            <person name="Dietrich F.S."/>
            <person name="Fisk D.G."/>
            <person name="Binkley G."/>
            <person name="Balakrishnan R."/>
            <person name="Costanzo M.C."/>
            <person name="Dwight S.S."/>
            <person name="Hitz B.C."/>
            <person name="Karra K."/>
            <person name="Nash R.S."/>
            <person name="Weng S."/>
            <person name="Wong E.D."/>
            <person name="Lloyd P."/>
            <person name="Skrzypek M.S."/>
            <person name="Miyasato S.R."/>
            <person name="Simison M."/>
            <person name="Cherry J.M."/>
        </authorList>
    </citation>
    <scope>GENOME REANNOTATION</scope>
    <source>
        <strain>ATCC 204508 / S288c</strain>
    </source>
</reference>
<reference key="5">
    <citation type="journal article" date="2007" name="Genome Res.">
        <title>Approaching a complete repository of sequence-verified protein-encoding clones for Saccharomyces cerevisiae.</title>
        <authorList>
            <person name="Hu Y."/>
            <person name="Rolfs A."/>
            <person name="Bhullar B."/>
            <person name="Murthy T.V.S."/>
            <person name="Zhu C."/>
            <person name="Berger M.F."/>
            <person name="Camargo A.A."/>
            <person name="Kelley F."/>
            <person name="McCarron S."/>
            <person name="Jepson D."/>
            <person name="Richardson A."/>
            <person name="Raphael J."/>
            <person name="Moreira D."/>
            <person name="Taycher E."/>
            <person name="Zuo D."/>
            <person name="Mohr S."/>
            <person name="Kane M.F."/>
            <person name="Williamson J."/>
            <person name="Simpson A.J.G."/>
            <person name="Bulyk M.L."/>
            <person name="Harlow E."/>
            <person name="Marsischky G."/>
            <person name="Kolodner R.D."/>
            <person name="LaBaer J."/>
        </authorList>
    </citation>
    <scope>NUCLEOTIDE SEQUENCE [GENOMIC DNA]</scope>
    <source>
        <strain>ATCC 204508 / S288c</strain>
    </source>
</reference>
<reference key="6">
    <citation type="journal article" date="2003" name="Nature">
        <title>Global analysis of protein localization in budding yeast.</title>
        <authorList>
            <person name="Huh W.-K."/>
            <person name="Falvo J.V."/>
            <person name="Gerke L.C."/>
            <person name="Carroll A.S."/>
            <person name="Howson R.W."/>
            <person name="Weissman J.S."/>
            <person name="O'Shea E.K."/>
        </authorList>
    </citation>
    <scope>SUBCELLULAR LOCATION [LARGE SCALE ANALYSIS]</scope>
</reference>
<reference key="7">
    <citation type="journal article" date="2006" name="PLoS Genet.">
        <title>Assessing systems properties of yeast mitochondria through an interaction map of the organelle.</title>
        <authorList>
            <person name="Perocchi F."/>
            <person name="Jensen L.J."/>
            <person name="Gagneur J."/>
            <person name="Ahting U."/>
            <person name="von Mering C."/>
            <person name="Bork P."/>
            <person name="Prokisch H."/>
            <person name="Steinmetz L.M."/>
        </authorList>
    </citation>
    <scope>SUBCELLULAR LOCATION [LARGE SCALE ANALYSIS]</scope>
</reference>
<reference key="8">
    <citation type="journal article" date="2015" name="Nat. Commun.">
        <title>Organization of the mitochondrial translation machinery studied in situ by cryoelectron tomography.</title>
        <authorList>
            <person name="Pfeffer S."/>
            <person name="Woellhaf M.W."/>
            <person name="Herrmann J.M."/>
            <person name="Forster F."/>
        </authorList>
    </citation>
    <scope>SUBCELLULAR LOCATION</scope>
</reference>
<reference key="9">
    <citation type="journal article" date="2014" name="Science">
        <title>Structure of the yeast mitochondrial large ribosomal subunit.</title>
        <authorList>
            <person name="Amunts A."/>
            <person name="Brown A."/>
            <person name="Bai X.C."/>
            <person name="Llacer J.L."/>
            <person name="Hussain T."/>
            <person name="Emsley P."/>
            <person name="Long F."/>
            <person name="Murshudov G."/>
            <person name="Scheres S.H."/>
            <person name="Ramakrishnan V."/>
        </authorList>
    </citation>
    <scope>STRUCTURE BY ELECTRON MICROSCOPY (3.20 ANGSTROMS)</scope>
    <scope>SUBUNIT</scope>
</reference>
<evidence type="ECO:0000255" key="1"/>
<evidence type="ECO:0000269" key="2">
    <source>
    </source>
</evidence>
<evidence type="ECO:0000269" key="3">
    <source>
    </source>
</evidence>
<evidence type="ECO:0000269" key="4">
    <source>
    </source>
</evidence>
<evidence type="ECO:0000269" key="5">
    <source>
    </source>
</evidence>
<evidence type="ECO:0000269" key="6">
    <source>
    </source>
</evidence>
<evidence type="ECO:0000303" key="7">
    <source>
    </source>
</evidence>
<evidence type="ECO:0000305" key="8"/>
<evidence type="ECO:0000305" key="9">
    <source>
    </source>
</evidence>
<evidence type="ECO:0000305" key="10">
    <source>
    </source>
</evidence>
<protein>
    <recommendedName>
        <fullName evidence="7">Large ribosomal subunit protein bL35m</fullName>
    </recommendedName>
    <alternativeName>
        <fullName>54S ribosomal protein MRP35</fullName>
    </alternativeName>
</protein>
<feature type="transit peptide" description="Mitochondrion" evidence="1">
    <location>
        <begin position="1"/>
        <end position="53"/>
    </location>
</feature>
<feature type="chain" id="PRO_0000203430" description="Large ribosomal subunit protein bL35m">
    <location>
        <begin position="54"/>
        <end position="115"/>
    </location>
</feature>
<feature type="sequence variant" description="In strain: V1-09 and YJM339." evidence="4">
    <original>R</original>
    <variation>Q</variation>
    <location>
        <position position="11"/>
    </location>
</feature>
<feature type="sequence variant" description="In strain: YJM269, YJM270, YJM326 and YJM1129." evidence="4">
    <original>S</original>
    <variation>P</variation>
    <location>
        <position position="31"/>
    </location>
</feature>
<dbReference type="EMBL" id="EF125216">
    <property type="protein sequence ID" value="ABN58536.1"/>
    <property type="molecule type" value="Genomic_DNA"/>
</dbReference>
<dbReference type="EMBL" id="EF125217">
    <property type="protein sequence ID" value="ABN58545.1"/>
    <property type="molecule type" value="Genomic_DNA"/>
</dbReference>
<dbReference type="EMBL" id="EF125218">
    <property type="protein sequence ID" value="ABN58554.1"/>
    <property type="molecule type" value="Genomic_DNA"/>
</dbReference>
<dbReference type="EMBL" id="EF125219">
    <property type="protein sequence ID" value="ABN58563.1"/>
    <property type="molecule type" value="Genomic_DNA"/>
</dbReference>
<dbReference type="EMBL" id="EF125220">
    <property type="protein sequence ID" value="ABN58572.1"/>
    <property type="molecule type" value="Genomic_DNA"/>
</dbReference>
<dbReference type="EMBL" id="EF125221">
    <property type="protein sequence ID" value="ABN58581.1"/>
    <property type="molecule type" value="Genomic_DNA"/>
</dbReference>
<dbReference type="EMBL" id="EF125222">
    <property type="protein sequence ID" value="ABN58590.1"/>
    <property type="molecule type" value="Genomic_DNA"/>
</dbReference>
<dbReference type="EMBL" id="EF125223">
    <property type="protein sequence ID" value="ABN58599.1"/>
    <property type="molecule type" value="Genomic_DNA"/>
</dbReference>
<dbReference type="EMBL" id="EF125224">
    <property type="protein sequence ID" value="ABN58608.1"/>
    <property type="molecule type" value="Genomic_DNA"/>
</dbReference>
<dbReference type="EMBL" id="EF125225">
    <property type="protein sequence ID" value="ABN58617.1"/>
    <property type="molecule type" value="Genomic_DNA"/>
</dbReference>
<dbReference type="EMBL" id="EF125226">
    <property type="protein sequence ID" value="ABN58626.1"/>
    <property type="molecule type" value="Genomic_DNA"/>
</dbReference>
<dbReference type="EMBL" id="EF125228">
    <property type="protein sequence ID" value="ABN58644.1"/>
    <property type="molecule type" value="Genomic_DNA"/>
</dbReference>
<dbReference type="EMBL" id="Z69382">
    <property type="protein sequence ID" value="CAA93385.1"/>
    <property type="molecule type" value="Genomic_DNA"/>
</dbReference>
<dbReference type="EMBL" id="Z71398">
    <property type="protein sequence ID" value="CAA96003.1"/>
    <property type="molecule type" value="Genomic_DNA"/>
</dbReference>
<dbReference type="EMBL" id="AY692589">
    <property type="protein sequence ID" value="AAT92608.1"/>
    <property type="molecule type" value="Genomic_DNA"/>
</dbReference>
<dbReference type="EMBL" id="BK006947">
    <property type="protein sequence ID" value="DAA10427.1"/>
    <property type="molecule type" value="Genomic_DNA"/>
</dbReference>
<dbReference type="PIR" id="S63063">
    <property type="entry name" value="S63063"/>
</dbReference>
<dbReference type="RefSeq" id="NP_014277.1">
    <property type="nucleotide sequence ID" value="NM_001182960.1"/>
</dbReference>
<dbReference type="PDB" id="3J6B">
    <property type="method" value="EM"/>
    <property type="resolution" value="3.20 A"/>
    <property type="chains" value="Z=1-115"/>
</dbReference>
<dbReference type="PDB" id="5MRC">
    <property type="method" value="EM"/>
    <property type="resolution" value="3.25 A"/>
    <property type="chains" value="Z=54-115"/>
</dbReference>
<dbReference type="PDB" id="5MRE">
    <property type="method" value="EM"/>
    <property type="resolution" value="3.75 A"/>
    <property type="chains" value="Z=54-115"/>
</dbReference>
<dbReference type="PDB" id="5MRF">
    <property type="method" value="EM"/>
    <property type="resolution" value="4.97 A"/>
    <property type="chains" value="Z=54-115"/>
</dbReference>
<dbReference type="PDBsum" id="3J6B"/>
<dbReference type="PDBsum" id="5MRC"/>
<dbReference type="PDBsum" id="5MRE"/>
<dbReference type="PDBsum" id="5MRF"/>
<dbReference type="EMDB" id="EMD-3551"/>
<dbReference type="EMDB" id="EMD-3552"/>
<dbReference type="EMDB" id="EMD-3553"/>
<dbReference type="SMR" id="P53921"/>
<dbReference type="BioGRID" id="35705">
    <property type="interactions" value="146"/>
</dbReference>
<dbReference type="ComplexPortal" id="CPX-1602">
    <property type="entry name" value="54S mitochondrial large ribosomal subunit"/>
</dbReference>
<dbReference type="DIP" id="DIP-2009N"/>
<dbReference type="FunCoup" id="P53921">
    <property type="interactions" value="84"/>
</dbReference>
<dbReference type="IntAct" id="P53921">
    <property type="interactions" value="43"/>
</dbReference>
<dbReference type="MINT" id="P53921"/>
<dbReference type="STRING" id="4932.YNL122C"/>
<dbReference type="PaxDb" id="4932-YNL122C"/>
<dbReference type="PeptideAtlas" id="P53921"/>
<dbReference type="EnsemblFungi" id="YNL122C_mRNA">
    <property type="protein sequence ID" value="YNL122C"/>
    <property type="gene ID" value="YNL122C"/>
</dbReference>
<dbReference type="GeneID" id="855601"/>
<dbReference type="KEGG" id="sce:YNL122C"/>
<dbReference type="AGR" id="SGD:S000005066"/>
<dbReference type="SGD" id="S000005066">
    <property type="gene designation" value="MRP35"/>
</dbReference>
<dbReference type="VEuPathDB" id="FungiDB:YNL122C"/>
<dbReference type="eggNOG" id="ENOG502S7SR">
    <property type="taxonomic scope" value="Eukaryota"/>
</dbReference>
<dbReference type="HOGENOM" id="CLU_166987_1_0_1"/>
<dbReference type="InParanoid" id="P53921"/>
<dbReference type="OrthoDB" id="162638at2759"/>
<dbReference type="BioCyc" id="YEAST:G3O-33143-MONOMER"/>
<dbReference type="BioGRID-ORCS" id="855601">
    <property type="hits" value="1 hit in 10 CRISPR screens"/>
</dbReference>
<dbReference type="PRO" id="PR:P53921"/>
<dbReference type="Proteomes" id="UP000002311">
    <property type="component" value="Chromosome XIV"/>
</dbReference>
<dbReference type="RNAct" id="P53921">
    <property type="molecule type" value="protein"/>
</dbReference>
<dbReference type="GO" id="GO:0015934">
    <property type="term" value="C:large ribosomal subunit"/>
    <property type="evidence" value="ECO:0000318"/>
    <property type="project" value="GO_Central"/>
</dbReference>
<dbReference type="GO" id="GO:0005743">
    <property type="term" value="C:mitochondrial inner membrane"/>
    <property type="evidence" value="ECO:0000303"/>
    <property type="project" value="ComplexPortal"/>
</dbReference>
<dbReference type="GO" id="GO:0005762">
    <property type="term" value="C:mitochondrial large ribosomal subunit"/>
    <property type="evidence" value="ECO:0000314"/>
    <property type="project" value="SGD"/>
</dbReference>
<dbReference type="GO" id="GO:0005739">
    <property type="term" value="C:mitochondrion"/>
    <property type="evidence" value="ECO:0000314"/>
    <property type="project" value="SGD"/>
</dbReference>
<dbReference type="GO" id="GO:0003735">
    <property type="term" value="F:structural constituent of ribosome"/>
    <property type="evidence" value="ECO:0000314"/>
    <property type="project" value="SGD"/>
</dbReference>
<dbReference type="GO" id="GO:0032543">
    <property type="term" value="P:mitochondrial translation"/>
    <property type="evidence" value="ECO:0000303"/>
    <property type="project" value="ComplexPortal"/>
</dbReference>
<dbReference type="Gene3D" id="4.10.410.60">
    <property type="match status" value="1"/>
</dbReference>
<dbReference type="InterPro" id="IPR001706">
    <property type="entry name" value="Ribosomal_bL35"/>
</dbReference>
<dbReference type="InterPro" id="IPR021137">
    <property type="entry name" value="Ribosomal_bL35-like"/>
</dbReference>
<dbReference type="InterPro" id="IPR037229">
    <property type="entry name" value="Ribosomal_bL35_sf"/>
</dbReference>
<dbReference type="PANTHER" id="PTHR33343">
    <property type="entry name" value="54S RIBOSOMAL PROTEIN BL35M"/>
    <property type="match status" value="1"/>
</dbReference>
<dbReference type="PANTHER" id="PTHR33343:SF1">
    <property type="entry name" value="LARGE RIBOSOMAL SUBUNIT PROTEIN BL35M"/>
    <property type="match status" value="1"/>
</dbReference>
<dbReference type="Pfam" id="PF01632">
    <property type="entry name" value="Ribosomal_L35p"/>
    <property type="match status" value="1"/>
</dbReference>
<dbReference type="SUPFAM" id="SSF143034">
    <property type="entry name" value="L35p-like"/>
    <property type="match status" value="1"/>
</dbReference>
<proteinExistence type="evidence at protein level"/>
<name>RN35_YEAST</name>
<keyword id="KW-0002">3D-structure</keyword>
<keyword id="KW-0496">Mitochondrion</keyword>
<keyword id="KW-1185">Reference proteome</keyword>
<keyword id="KW-0687">Ribonucleoprotein</keyword>
<keyword id="KW-0689">Ribosomal protein</keyword>
<keyword id="KW-0809">Transit peptide</keyword>
<sequence>MKISLHNKRQRGDQNQNMSVFNVLKPLLKGSNSFKVKLNGFLFNNVSTITIRTLMKTHKGTAKRWRRTGNTFKRGIAGRKHGNIGWSHRSLKALTGRKIAHPAYSKHLKRLLPYH</sequence>